<proteinExistence type="inferred from homology"/>
<evidence type="ECO:0000255" key="1">
    <source>
        <dbReference type="HAMAP-Rule" id="MF_00052"/>
    </source>
</evidence>
<evidence type="ECO:0000255" key="2">
    <source>
        <dbReference type="PROSITE-ProRule" id="PRU01319"/>
    </source>
</evidence>
<keyword id="KW-0963">Cytoplasm</keyword>
<keyword id="KW-0255">Endonuclease</keyword>
<keyword id="KW-0378">Hydrolase</keyword>
<keyword id="KW-0464">Manganese</keyword>
<keyword id="KW-0479">Metal-binding</keyword>
<keyword id="KW-0540">Nuclease</keyword>
<accession>Q2FHJ4</accession>
<comment type="function">
    <text evidence="1">Endonuclease that specifically degrades the RNA of RNA-DNA hybrids.</text>
</comment>
<comment type="catalytic activity">
    <reaction evidence="1">
        <text>Endonucleolytic cleavage to 5'-phosphomonoester.</text>
        <dbReference type="EC" id="3.1.26.4"/>
    </reaction>
</comment>
<comment type="cofactor">
    <cofactor evidence="1">
        <name>Mn(2+)</name>
        <dbReference type="ChEBI" id="CHEBI:29035"/>
    </cofactor>
    <cofactor evidence="1">
        <name>Mg(2+)</name>
        <dbReference type="ChEBI" id="CHEBI:18420"/>
    </cofactor>
    <text evidence="1">Manganese or magnesium. Binds 1 divalent metal ion per monomer in the absence of substrate. May bind a second metal ion after substrate binding.</text>
</comment>
<comment type="subcellular location">
    <subcellularLocation>
        <location evidence="1">Cytoplasm</location>
    </subcellularLocation>
</comment>
<comment type="similarity">
    <text evidence="1">Belongs to the RNase HII family.</text>
</comment>
<protein>
    <recommendedName>
        <fullName evidence="1">Ribonuclease HII</fullName>
        <shortName evidence="1">RNase HII</shortName>
        <ecNumber evidence="1">3.1.26.4</ecNumber>
    </recommendedName>
</protein>
<sequence>MTLTIKEVTQLINAVNTIEELENHECFLDERKGVQNAIARRRKALEKEQALKEKYVEMTYFENEILKEHPNAIICGIDEVGRGPLAGPVVACATILNSNHNYLGLDDSKKVPVTKRLELNEALKNEVTAFAYGIATAEEIDEFNIYKATQIAMQRAIDGLSVQPTHLLIDAMTLDNALPQVSLIKGDARSVSIAAASIMAKVFRDDYMTQLSKDYPEYGFEKNAGYGTKQHLLAIDDIGIMKEHRKSFEPIKSLL</sequence>
<feature type="chain" id="PRO_0000235769" description="Ribonuclease HII">
    <location>
        <begin position="1"/>
        <end position="255"/>
    </location>
</feature>
<feature type="domain" description="RNase H type-2" evidence="2">
    <location>
        <begin position="72"/>
        <end position="255"/>
    </location>
</feature>
<feature type="binding site" evidence="1">
    <location>
        <position position="78"/>
    </location>
    <ligand>
        <name>a divalent metal cation</name>
        <dbReference type="ChEBI" id="CHEBI:60240"/>
    </ligand>
</feature>
<feature type="binding site" evidence="1">
    <location>
        <position position="79"/>
    </location>
    <ligand>
        <name>a divalent metal cation</name>
        <dbReference type="ChEBI" id="CHEBI:60240"/>
    </ligand>
</feature>
<feature type="binding site" evidence="1">
    <location>
        <position position="170"/>
    </location>
    <ligand>
        <name>a divalent metal cation</name>
        <dbReference type="ChEBI" id="CHEBI:60240"/>
    </ligand>
</feature>
<organism>
    <name type="scientific">Staphylococcus aureus (strain USA300)</name>
    <dbReference type="NCBI Taxonomy" id="367830"/>
    <lineage>
        <taxon>Bacteria</taxon>
        <taxon>Bacillati</taxon>
        <taxon>Bacillota</taxon>
        <taxon>Bacilli</taxon>
        <taxon>Bacillales</taxon>
        <taxon>Staphylococcaceae</taxon>
        <taxon>Staphylococcus</taxon>
    </lineage>
</organism>
<gene>
    <name evidence="1" type="primary">rnhB</name>
    <name type="ordered locus">SAUSA300_1137</name>
</gene>
<name>RNH2_STAA3</name>
<reference key="1">
    <citation type="journal article" date="2006" name="Lancet">
        <title>Complete genome sequence of USA300, an epidemic clone of community-acquired meticillin-resistant Staphylococcus aureus.</title>
        <authorList>
            <person name="Diep B.A."/>
            <person name="Gill S.R."/>
            <person name="Chang R.F."/>
            <person name="Phan T.H."/>
            <person name="Chen J.H."/>
            <person name="Davidson M.G."/>
            <person name="Lin F."/>
            <person name="Lin J."/>
            <person name="Carleton H.A."/>
            <person name="Mongodin E.F."/>
            <person name="Sensabaugh G.F."/>
            <person name="Perdreau-Remington F."/>
        </authorList>
    </citation>
    <scope>NUCLEOTIDE SEQUENCE [LARGE SCALE GENOMIC DNA]</scope>
    <source>
        <strain>USA300</strain>
    </source>
</reference>
<dbReference type="EC" id="3.1.26.4" evidence="1"/>
<dbReference type="EMBL" id="CP000255">
    <property type="protein sequence ID" value="ABD20610.1"/>
    <property type="molecule type" value="Genomic_DNA"/>
</dbReference>
<dbReference type="RefSeq" id="WP_000176394.1">
    <property type="nucleotide sequence ID" value="NZ_CP027476.1"/>
</dbReference>
<dbReference type="SMR" id="Q2FHJ4"/>
<dbReference type="KEGG" id="saa:SAUSA300_1137"/>
<dbReference type="HOGENOM" id="CLU_036532_2_1_9"/>
<dbReference type="OMA" id="YPTKLHL"/>
<dbReference type="Proteomes" id="UP000001939">
    <property type="component" value="Chromosome"/>
</dbReference>
<dbReference type="GO" id="GO:0005737">
    <property type="term" value="C:cytoplasm"/>
    <property type="evidence" value="ECO:0007669"/>
    <property type="project" value="UniProtKB-SubCell"/>
</dbReference>
<dbReference type="GO" id="GO:0032299">
    <property type="term" value="C:ribonuclease H2 complex"/>
    <property type="evidence" value="ECO:0007669"/>
    <property type="project" value="TreeGrafter"/>
</dbReference>
<dbReference type="GO" id="GO:0030145">
    <property type="term" value="F:manganese ion binding"/>
    <property type="evidence" value="ECO:0007669"/>
    <property type="project" value="UniProtKB-UniRule"/>
</dbReference>
<dbReference type="GO" id="GO:0003723">
    <property type="term" value="F:RNA binding"/>
    <property type="evidence" value="ECO:0007669"/>
    <property type="project" value="InterPro"/>
</dbReference>
<dbReference type="GO" id="GO:0004523">
    <property type="term" value="F:RNA-DNA hybrid ribonuclease activity"/>
    <property type="evidence" value="ECO:0007669"/>
    <property type="project" value="UniProtKB-UniRule"/>
</dbReference>
<dbReference type="GO" id="GO:0043137">
    <property type="term" value="P:DNA replication, removal of RNA primer"/>
    <property type="evidence" value="ECO:0007669"/>
    <property type="project" value="TreeGrafter"/>
</dbReference>
<dbReference type="GO" id="GO:0006298">
    <property type="term" value="P:mismatch repair"/>
    <property type="evidence" value="ECO:0007669"/>
    <property type="project" value="TreeGrafter"/>
</dbReference>
<dbReference type="CDD" id="cd07182">
    <property type="entry name" value="RNase_HII_bacteria_HII_like"/>
    <property type="match status" value="1"/>
</dbReference>
<dbReference type="FunFam" id="3.30.420.10:FF:000006">
    <property type="entry name" value="Ribonuclease HII"/>
    <property type="match status" value="1"/>
</dbReference>
<dbReference type="Gene3D" id="3.30.420.10">
    <property type="entry name" value="Ribonuclease H-like superfamily/Ribonuclease H"/>
    <property type="match status" value="1"/>
</dbReference>
<dbReference type="HAMAP" id="MF_00052_B">
    <property type="entry name" value="RNase_HII_B"/>
    <property type="match status" value="1"/>
</dbReference>
<dbReference type="InterPro" id="IPR022898">
    <property type="entry name" value="RNase_HII"/>
</dbReference>
<dbReference type="InterPro" id="IPR001352">
    <property type="entry name" value="RNase_HII/HIII"/>
</dbReference>
<dbReference type="InterPro" id="IPR024567">
    <property type="entry name" value="RNase_HII/HIII_dom"/>
</dbReference>
<dbReference type="InterPro" id="IPR012337">
    <property type="entry name" value="RNaseH-like_sf"/>
</dbReference>
<dbReference type="InterPro" id="IPR036397">
    <property type="entry name" value="RNaseH_sf"/>
</dbReference>
<dbReference type="NCBIfam" id="NF000594">
    <property type="entry name" value="PRK00015.1-1"/>
    <property type="match status" value="1"/>
</dbReference>
<dbReference type="NCBIfam" id="NF000595">
    <property type="entry name" value="PRK00015.1-3"/>
    <property type="match status" value="1"/>
</dbReference>
<dbReference type="PANTHER" id="PTHR10954">
    <property type="entry name" value="RIBONUCLEASE H2 SUBUNIT A"/>
    <property type="match status" value="1"/>
</dbReference>
<dbReference type="PANTHER" id="PTHR10954:SF18">
    <property type="entry name" value="RIBONUCLEASE HII"/>
    <property type="match status" value="1"/>
</dbReference>
<dbReference type="Pfam" id="PF01351">
    <property type="entry name" value="RNase_HII"/>
    <property type="match status" value="1"/>
</dbReference>
<dbReference type="SUPFAM" id="SSF53098">
    <property type="entry name" value="Ribonuclease H-like"/>
    <property type="match status" value="1"/>
</dbReference>
<dbReference type="PROSITE" id="PS51975">
    <property type="entry name" value="RNASE_H_2"/>
    <property type="match status" value="1"/>
</dbReference>